<gene>
    <name evidence="1" type="primary">smpB</name>
    <name type="ordered locus">NFA_44800</name>
</gene>
<comment type="function">
    <text evidence="1">Required for rescue of stalled ribosomes mediated by trans-translation. Binds to transfer-messenger RNA (tmRNA), required for stable association of tmRNA with ribosomes. tmRNA and SmpB together mimic tRNA shape, replacing the anticodon stem-loop with SmpB. tmRNA is encoded by the ssrA gene; the 2 termini fold to resemble tRNA(Ala) and it encodes a 'tag peptide', a short internal open reading frame. During trans-translation Ala-aminoacylated tmRNA acts like a tRNA, entering the A-site of stalled ribosomes, displacing the stalled mRNA. The ribosome then switches to translate the ORF on the tmRNA; the nascent peptide is terminated with the 'tag peptide' encoded by the tmRNA and targeted for degradation. The ribosome is freed to recommence translation, which seems to be the essential function of trans-translation.</text>
</comment>
<comment type="subcellular location">
    <subcellularLocation>
        <location evidence="1">Cytoplasm</location>
    </subcellularLocation>
    <text evidence="1">The tmRNA-SmpB complex associates with stalled 70S ribosomes.</text>
</comment>
<comment type="similarity">
    <text evidence="1">Belongs to the SmpB family.</text>
</comment>
<sequence>MTVMKEKGRKVIATNRRARHNYTILDTYEAGIVLVGTEVKSLREGKASLVDAFATVDNGEVWLRGLHIPEFSHGTWTNHSPRRVRKLLLHKREIERLVGKSREGNQTLVPLSMYFSDGKVKVELALARGKQDYDKRQDLARRTAEREVTRELGRRVKGMR</sequence>
<name>SSRP_NOCFA</name>
<keyword id="KW-0963">Cytoplasm</keyword>
<keyword id="KW-1185">Reference proteome</keyword>
<keyword id="KW-0694">RNA-binding</keyword>
<evidence type="ECO:0000255" key="1">
    <source>
        <dbReference type="HAMAP-Rule" id="MF_00023"/>
    </source>
</evidence>
<dbReference type="EMBL" id="AP006618">
    <property type="protein sequence ID" value="BAD59331.1"/>
    <property type="molecule type" value="Genomic_DNA"/>
</dbReference>
<dbReference type="SMR" id="Q5YR60"/>
<dbReference type="STRING" id="247156.NFA_44800"/>
<dbReference type="KEGG" id="nfa:NFA_44800"/>
<dbReference type="eggNOG" id="COG0691">
    <property type="taxonomic scope" value="Bacteria"/>
</dbReference>
<dbReference type="HOGENOM" id="CLU_108953_2_1_11"/>
<dbReference type="Proteomes" id="UP000006820">
    <property type="component" value="Chromosome"/>
</dbReference>
<dbReference type="GO" id="GO:0005829">
    <property type="term" value="C:cytosol"/>
    <property type="evidence" value="ECO:0007669"/>
    <property type="project" value="TreeGrafter"/>
</dbReference>
<dbReference type="GO" id="GO:0003723">
    <property type="term" value="F:RNA binding"/>
    <property type="evidence" value="ECO:0007669"/>
    <property type="project" value="UniProtKB-UniRule"/>
</dbReference>
<dbReference type="GO" id="GO:0070929">
    <property type="term" value="P:trans-translation"/>
    <property type="evidence" value="ECO:0007669"/>
    <property type="project" value="UniProtKB-UniRule"/>
</dbReference>
<dbReference type="CDD" id="cd09294">
    <property type="entry name" value="SmpB"/>
    <property type="match status" value="1"/>
</dbReference>
<dbReference type="Gene3D" id="2.40.280.10">
    <property type="match status" value="1"/>
</dbReference>
<dbReference type="HAMAP" id="MF_00023">
    <property type="entry name" value="SmpB"/>
    <property type="match status" value="1"/>
</dbReference>
<dbReference type="InterPro" id="IPR023620">
    <property type="entry name" value="SmpB"/>
</dbReference>
<dbReference type="InterPro" id="IPR000037">
    <property type="entry name" value="SsrA-bd_prot"/>
</dbReference>
<dbReference type="InterPro" id="IPR020081">
    <property type="entry name" value="SsrA-bd_prot_CS"/>
</dbReference>
<dbReference type="NCBIfam" id="NF003843">
    <property type="entry name" value="PRK05422.1"/>
    <property type="match status" value="1"/>
</dbReference>
<dbReference type="NCBIfam" id="TIGR00086">
    <property type="entry name" value="smpB"/>
    <property type="match status" value="1"/>
</dbReference>
<dbReference type="PANTHER" id="PTHR30308:SF2">
    <property type="entry name" value="SSRA-BINDING PROTEIN"/>
    <property type="match status" value="1"/>
</dbReference>
<dbReference type="PANTHER" id="PTHR30308">
    <property type="entry name" value="TMRNA-BINDING COMPONENT OF TRANS-TRANSLATION TAGGING COMPLEX"/>
    <property type="match status" value="1"/>
</dbReference>
<dbReference type="Pfam" id="PF01668">
    <property type="entry name" value="SmpB"/>
    <property type="match status" value="1"/>
</dbReference>
<dbReference type="SUPFAM" id="SSF74982">
    <property type="entry name" value="Small protein B (SmpB)"/>
    <property type="match status" value="1"/>
</dbReference>
<dbReference type="PROSITE" id="PS01317">
    <property type="entry name" value="SSRP"/>
    <property type="match status" value="1"/>
</dbReference>
<accession>Q5YR60</accession>
<proteinExistence type="inferred from homology"/>
<reference key="1">
    <citation type="journal article" date="2004" name="Proc. Natl. Acad. Sci. U.S.A.">
        <title>The complete genomic sequence of Nocardia farcinica IFM 10152.</title>
        <authorList>
            <person name="Ishikawa J."/>
            <person name="Yamashita A."/>
            <person name="Mikami Y."/>
            <person name="Hoshino Y."/>
            <person name="Kurita H."/>
            <person name="Hotta K."/>
            <person name="Shiba T."/>
            <person name="Hattori M."/>
        </authorList>
    </citation>
    <scope>NUCLEOTIDE SEQUENCE [LARGE SCALE GENOMIC DNA]</scope>
    <source>
        <strain>IFM 10152</strain>
    </source>
</reference>
<organism>
    <name type="scientific">Nocardia farcinica (strain IFM 10152)</name>
    <dbReference type="NCBI Taxonomy" id="247156"/>
    <lineage>
        <taxon>Bacteria</taxon>
        <taxon>Bacillati</taxon>
        <taxon>Actinomycetota</taxon>
        <taxon>Actinomycetes</taxon>
        <taxon>Mycobacteriales</taxon>
        <taxon>Nocardiaceae</taxon>
        <taxon>Nocardia</taxon>
    </lineage>
</organism>
<feature type="chain" id="PRO_0000102996" description="SsrA-binding protein">
    <location>
        <begin position="1"/>
        <end position="160"/>
    </location>
</feature>
<protein>
    <recommendedName>
        <fullName evidence="1">SsrA-binding protein</fullName>
    </recommendedName>
    <alternativeName>
        <fullName evidence="1">Small protein B</fullName>
    </alternativeName>
</protein>